<accession>Q07830</accession>
<accession>D6VXX4</accession>
<sequence>MDEKTIKKSILSSSNDEKIIYKSRIKKFQKNHKFYIILLVFIAILQFISIAFFTRGFLLSRHVLDNISSQNETSKLPPRFNKAVILVIDALRFDFAIPVNESHSNYNLNYHNNILSLYDSFASDKDASSLLLKFIADPPTTTLQRLKGLTTGSLPTFIDAGSNFDGTVIEEDNFLKQLHLANKTVKFAGDDTWMALFHPFLSNDSFPLESLNVWDLDTVDNGVMDYFHDHLQQDKEWDVMIGHMLGIDHVGHKYGPDHFTMREKQIQVDQFIDWILKSIDDDTLLVILGDHGMDHTGNHGGDSIDELESTLFLYSKKPDMWRLKETSNYNIDNLGHDYRSVRQIDLVSSLALLMGQPIPFNNLGWPIDEIARNDREWSQFVNSAISQLQLYKDTMQIHHGNDEILEPLAKNISNTPPTSDPEKFVKLGHKYQKVFLQTCEELWAKFDYYSIATGITLLATSLVLLISITKLIPSIVVNQMVPEFVPGIIIMVLVTNLCFHGIFYVYQQPSFVDQFWGTLLATAIGIIIGCYITIFDRYNFIWIAMRLGETLADYWSRIAVMFMIIHALLFTSNSFTIWEDRIVAFLLSTFGMLTLYEFVFLPKRQSTTALLTATISEKEGTTSGVNPSTANSNYLPLTRFARLLGGYHSAVLIIFTRLASMITICREEQGEYCIPTFNNQNNSSWWVLGLCFLMIFILPACITGYYNLTSSYQAAAPIWINVFLKGILGLNFVYWSLTSLENNSAVIAIPFLRDVTIFKFTLARIIAGFSLIASNVGWLMGPLCIKLNIHNTDVKSHEATILGYTNIYGSEFFLLVINVLISILLFNKPLAQLSYFLMCNQLLSILEIIDLLKLKENIIGPIALGLLSYQHFFTTGHQATIPSVQWDIGFMLSEKVTFPFTQIAIILNTFGPHILVSLSVALLTLWSQPPDVLKPQTLLGRIVSNCGILLTYNTILCLSSFIWVTHFRRHLMVWKIFCPRFIFASLSLIVTQLVVTFGTIAFASGRLIKHINDIFWK</sequence>
<keyword id="KW-0961">Cell wall biogenesis/degradation</keyword>
<keyword id="KW-0256">Endoplasmic reticulum</keyword>
<keyword id="KW-0325">Glycoprotein</keyword>
<keyword id="KW-0337">GPI-anchor biosynthesis</keyword>
<keyword id="KW-0472">Membrane</keyword>
<keyword id="KW-1185">Reference proteome</keyword>
<keyword id="KW-0808">Transferase</keyword>
<keyword id="KW-0812">Transmembrane</keyword>
<keyword id="KW-1133">Transmembrane helix</keyword>
<comment type="function">
    <text evidence="2 3 4 5">Involved in glycosylphosphatidylinositol-anchor biosynthesis. Transfers ethanolamine phosphate to the GPI third mannose which links the GPI-anchor to the C-terminus of the proteins by an amide bond. Involved in cell wall biosynthesis.</text>
</comment>
<comment type="pathway">
    <text>Glycolipid biosynthesis; glycosylphosphatidylinositol-anchor biosynthesis.</text>
</comment>
<comment type="subcellular location">
    <subcellularLocation>
        <location evidence="7">Endoplasmic reticulum membrane</location>
        <topology evidence="7">Multi-pass membrane protein</topology>
    </subcellularLocation>
</comment>
<comment type="PTM">
    <text evidence="4">Glycosylated.</text>
</comment>
<comment type="miscellaneous">
    <text evidence="6">Present with 300 molecules/cell in log phase SD medium.</text>
</comment>
<comment type="similarity">
    <text evidence="7">Belongs to the PIGG/PIGN/PIGO family. PIGO subfamily.</text>
</comment>
<dbReference type="EC" id="2.-.-.-"/>
<dbReference type="EMBL" id="Z73136">
    <property type="protein sequence ID" value="CAA97480.1"/>
    <property type="molecule type" value="Genomic_DNA"/>
</dbReference>
<dbReference type="EMBL" id="BK006945">
    <property type="protein sequence ID" value="DAA09290.1"/>
    <property type="molecule type" value="Genomic_DNA"/>
</dbReference>
<dbReference type="PIR" id="S64782">
    <property type="entry name" value="S64782"/>
</dbReference>
<dbReference type="RefSeq" id="NP_013069.1">
    <property type="nucleotide sequence ID" value="NM_001181851.1"/>
</dbReference>
<dbReference type="SMR" id="Q07830"/>
<dbReference type="BioGRID" id="31222">
    <property type="interactions" value="598"/>
</dbReference>
<dbReference type="ComplexPortal" id="CPX-2680">
    <property type="entry name" value="Glycosylphosphatidylinsitol ethanolamine-phosphate transferase III complex"/>
</dbReference>
<dbReference type="DIP" id="DIP-5569N"/>
<dbReference type="FunCoup" id="Q07830">
    <property type="interactions" value="774"/>
</dbReference>
<dbReference type="IntAct" id="Q07830">
    <property type="interactions" value="3"/>
</dbReference>
<dbReference type="MINT" id="Q07830"/>
<dbReference type="STRING" id="4932.YLL031C"/>
<dbReference type="GlyCosmos" id="Q07830">
    <property type="glycosylation" value="10 sites, No reported glycans"/>
</dbReference>
<dbReference type="GlyGen" id="Q07830">
    <property type="glycosylation" value="10 sites"/>
</dbReference>
<dbReference type="PaxDb" id="4932-YLL031C"/>
<dbReference type="PeptideAtlas" id="Q07830"/>
<dbReference type="EnsemblFungi" id="YLL031C_mRNA">
    <property type="protein sequence ID" value="YLL031C"/>
    <property type="gene ID" value="YLL031C"/>
</dbReference>
<dbReference type="GeneID" id="850628"/>
<dbReference type="KEGG" id="sce:YLL031C"/>
<dbReference type="AGR" id="SGD:S000003954"/>
<dbReference type="SGD" id="S000003954">
    <property type="gene designation" value="GPI13"/>
</dbReference>
<dbReference type="VEuPathDB" id="FungiDB:YLL031C"/>
<dbReference type="eggNOG" id="KOG2126">
    <property type="taxonomic scope" value="Eukaryota"/>
</dbReference>
<dbReference type="GeneTree" id="ENSGT00910000144278"/>
<dbReference type="HOGENOM" id="CLU_004298_1_0_1"/>
<dbReference type="InParanoid" id="Q07830"/>
<dbReference type="OMA" id="YPSFDIF"/>
<dbReference type="OrthoDB" id="272139at2759"/>
<dbReference type="BioCyc" id="YEAST:G3O-32134-MONOMER"/>
<dbReference type="BRENDA" id="2.7.7.B26">
    <property type="organism ID" value="984"/>
</dbReference>
<dbReference type="UniPathway" id="UPA00196"/>
<dbReference type="BioGRID-ORCS" id="850628">
    <property type="hits" value="9 hits in 10 CRISPR screens"/>
</dbReference>
<dbReference type="PRO" id="PR:Q07830"/>
<dbReference type="Proteomes" id="UP000002311">
    <property type="component" value="Chromosome XII"/>
</dbReference>
<dbReference type="RNAct" id="Q07830">
    <property type="molecule type" value="protein"/>
</dbReference>
<dbReference type="GO" id="GO:0005783">
    <property type="term" value="C:endoplasmic reticulum"/>
    <property type="evidence" value="ECO:0007005"/>
    <property type="project" value="SGD"/>
</dbReference>
<dbReference type="GO" id="GO:0005789">
    <property type="term" value="C:endoplasmic reticulum membrane"/>
    <property type="evidence" value="ECO:0000318"/>
    <property type="project" value="GO_Central"/>
</dbReference>
<dbReference type="GO" id="GO:0051377">
    <property type="term" value="F:mannose-ethanolamine phosphotransferase activity"/>
    <property type="evidence" value="ECO:0000315"/>
    <property type="project" value="SGD"/>
</dbReference>
<dbReference type="GO" id="GO:0016772">
    <property type="term" value="F:transferase activity, transferring phosphorus-containing groups"/>
    <property type="evidence" value="ECO:0000315"/>
    <property type="project" value="SGD"/>
</dbReference>
<dbReference type="GO" id="GO:0071555">
    <property type="term" value="P:cell wall organization"/>
    <property type="evidence" value="ECO:0007669"/>
    <property type="project" value="UniProtKB-KW"/>
</dbReference>
<dbReference type="GO" id="GO:0006506">
    <property type="term" value="P:GPI anchor biosynthetic process"/>
    <property type="evidence" value="ECO:0000315"/>
    <property type="project" value="SGD"/>
</dbReference>
<dbReference type="CDD" id="cd16023">
    <property type="entry name" value="GPI_EPT_3"/>
    <property type="match status" value="1"/>
</dbReference>
<dbReference type="FunFam" id="3.40.720.10:FF:000056">
    <property type="entry name" value="Phosphatidylinositol glycan, class O"/>
    <property type="match status" value="1"/>
</dbReference>
<dbReference type="Gene3D" id="3.40.720.10">
    <property type="entry name" value="Alkaline Phosphatase, subunit A"/>
    <property type="match status" value="1"/>
</dbReference>
<dbReference type="InterPro" id="IPR017850">
    <property type="entry name" value="Alkaline_phosphatase_core_sf"/>
</dbReference>
<dbReference type="InterPro" id="IPR002591">
    <property type="entry name" value="Phosphodiest/P_Trfase"/>
</dbReference>
<dbReference type="InterPro" id="IPR037675">
    <property type="entry name" value="PIG-O_N"/>
</dbReference>
<dbReference type="InterPro" id="IPR039524">
    <property type="entry name" value="PIGO/GPI13"/>
</dbReference>
<dbReference type="PANTHER" id="PTHR23071:SF1">
    <property type="entry name" value="GPI ETHANOLAMINE PHOSPHATE TRANSFERASE 3"/>
    <property type="match status" value="1"/>
</dbReference>
<dbReference type="PANTHER" id="PTHR23071">
    <property type="entry name" value="PHOSPHATIDYLINOSITOL GLYCAN"/>
    <property type="match status" value="1"/>
</dbReference>
<dbReference type="Pfam" id="PF01663">
    <property type="entry name" value="Phosphodiest"/>
    <property type="match status" value="1"/>
</dbReference>
<dbReference type="SUPFAM" id="SSF53649">
    <property type="entry name" value="Alkaline phosphatase-like"/>
    <property type="match status" value="1"/>
</dbReference>
<name>GPI13_YEAST</name>
<protein>
    <recommendedName>
        <fullName>GPI ethanolamine phosphate transferase 3</fullName>
        <ecNumber>2.-.-.-</ecNumber>
    </recommendedName>
    <alternativeName>
        <fullName>Glycosylphosphatidylinositol-anchor biosynthesis protein 13</fullName>
    </alternativeName>
</protein>
<reference key="1">
    <citation type="journal article" date="1997" name="Nature">
        <title>The nucleotide sequence of Saccharomyces cerevisiae chromosome XII.</title>
        <authorList>
            <person name="Johnston M."/>
            <person name="Hillier L.W."/>
            <person name="Riles L."/>
            <person name="Albermann K."/>
            <person name="Andre B."/>
            <person name="Ansorge W."/>
            <person name="Benes V."/>
            <person name="Brueckner M."/>
            <person name="Delius H."/>
            <person name="Dubois E."/>
            <person name="Duesterhoeft A."/>
            <person name="Entian K.-D."/>
            <person name="Floeth M."/>
            <person name="Goffeau A."/>
            <person name="Hebling U."/>
            <person name="Heumann K."/>
            <person name="Heuss-Neitzel D."/>
            <person name="Hilbert H."/>
            <person name="Hilger F."/>
            <person name="Kleine K."/>
            <person name="Koetter P."/>
            <person name="Louis E.J."/>
            <person name="Messenguy F."/>
            <person name="Mewes H.-W."/>
            <person name="Miosga T."/>
            <person name="Moestl D."/>
            <person name="Mueller-Auer S."/>
            <person name="Nentwich U."/>
            <person name="Obermaier B."/>
            <person name="Piravandi E."/>
            <person name="Pohl T.M."/>
            <person name="Portetelle D."/>
            <person name="Purnelle B."/>
            <person name="Rechmann S."/>
            <person name="Rieger M."/>
            <person name="Rinke M."/>
            <person name="Rose M."/>
            <person name="Scharfe M."/>
            <person name="Scherens B."/>
            <person name="Scholler P."/>
            <person name="Schwager C."/>
            <person name="Schwarz S."/>
            <person name="Underwood A.P."/>
            <person name="Urrestarazu L.A."/>
            <person name="Vandenbol M."/>
            <person name="Verhasselt P."/>
            <person name="Vierendeels F."/>
            <person name="Voet M."/>
            <person name="Volckaert G."/>
            <person name="Voss H."/>
            <person name="Wambutt R."/>
            <person name="Wedler E."/>
            <person name="Wedler H."/>
            <person name="Zimmermann F.K."/>
            <person name="Zollner A."/>
            <person name="Hani J."/>
            <person name="Hoheisel J.D."/>
        </authorList>
    </citation>
    <scope>NUCLEOTIDE SEQUENCE [LARGE SCALE GENOMIC DNA]</scope>
    <source>
        <strain>ATCC 204508 / S288c</strain>
    </source>
</reference>
<reference key="2">
    <citation type="journal article" date="2014" name="G3 (Bethesda)">
        <title>The reference genome sequence of Saccharomyces cerevisiae: Then and now.</title>
        <authorList>
            <person name="Engel S.R."/>
            <person name="Dietrich F.S."/>
            <person name="Fisk D.G."/>
            <person name="Binkley G."/>
            <person name="Balakrishnan R."/>
            <person name="Costanzo M.C."/>
            <person name="Dwight S.S."/>
            <person name="Hitz B.C."/>
            <person name="Karra K."/>
            <person name="Nash R.S."/>
            <person name="Weng S."/>
            <person name="Wong E.D."/>
            <person name="Lloyd P."/>
            <person name="Skrzypek M.S."/>
            <person name="Miyasato S.R."/>
            <person name="Simison M."/>
            <person name="Cherry J.M."/>
        </authorList>
    </citation>
    <scope>GENOME REANNOTATION</scope>
    <source>
        <strain>ATCC 204508 / S288c</strain>
    </source>
</reference>
<reference key="3">
    <citation type="journal article" date="1999" name="Yeast">
        <title>Disruption of six novel ORFs on the left arm of chromosome XII reveals one gene essential for vegetative growth of Saccharomyces cerevisiae.</title>
        <authorList>
            <person name="Zhang N."/>
            <person name="Ismail T."/>
            <person name="Wu J."/>
            <person name="Woodwark K.C."/>
            <person name="Gardner D.C.J."/>
            <person name="Walmsley R.M."/>
            <person name="Oliver S.G."/>
        </authorList>
    </citation>
    <scope>FUNCTION</scope>
</reference>
<reference key="4">
    <citation type="journal article" date="2000" name="J. Biol. Chem.">
        <title>YLL031c belongs to a novel family of membrane proteins involved in the transfer of ethanolaminephosphate onto the core structure of glycosylphosphatidylinositol anchors in yeast.</title>
        <authorList>
            <person name="Flury I."/>
            <person name="Benachour A."/>
            <person name="Conzelmann A."/>
        </authorList>
    </citation>
    <scope>FUNCTION</scope>
    <scope>SUBCELLULAR LOCATION</scope>
    <scope>GLYCOSYLATION</scope>
</reference>
<reference key="5">
    <citation type="journal article" date="2000" name="Mol. Biol. Cell">
        <title>Glycosylphosphatidylinositol biosynthesis defects in Gpi11p- and Gpi13p-deficient yeast suggest a branched pathway and implicate gpi13p in phosphoethanolamine transfer to the third mannose.</title>
        <authorList>
            <person name="Taron C.H."/>
            <person name="Wiedman J.M."/>
            <person name="Grimme S.J."/>
            <person name="Orlean P."/>
        </authorList>
    </citation>
    <scope>FUNCTION</scope>
</reference>
<reference key="6">
    <citation type="journal article" date="2002" name="Genes Genet. Syst.">
        <title>Genetic characterization of genes encoding enzymes catalyzing addition of phospho-ethanolamine to the glycosylphosphatidylinositol anchor in Saccharomyces cerevisiae.</title>
        <authorList>
            <person name="Toh-e A."/>
            <person name="Oguchi T."/>
        </authorList>
    </citation>
    <scope>FUNCTION</scope>
    <scope>MUTAGENESIS OF HIS-198; LEU-231; ILE-367; ASN-411; SER-556; ASP-887 AND THR-901</scope>
</reference>
<reference key="7">
    <citation type="journal article" date="2003" name="Nature">
        <title>Global analysis of protein localization in budding yeast.</title>
        <authorList>
            <person name="Huh W.-K."/>
            <person name="Falvo J.V."/>
            <person name="Gerke L.C."/>
            <person name="Carroll A.S."/>
            <person name="Howson R.W."/>
            <person name="Weissman J.S."/>
            <person name="O'Shea E.K."/>
        </authorList>
    </citation>
    <scope>SUBCELLULAR LOCATION [LARGE SCALE ANALYSIS]</scope>
</reference>
<reference key="8">
    <citation type="journal article" date="2003" name="Nature">
        <title>Global analysis of protein expression in yeast.</title>
        <authorList>
            <person name="Ghaemmaghami S."/>
            <person name="Huh W.-K."/>
            <person name="Bower K."/>
            <person name="Howson R.W."/>
            <person name="Belle A."/>
            <person name="Dephoure N."/>
            <person name="O'Shea E.K."/>
            <person name="Weissman J.S."/>
        </authorList>
    </citation>
    <scope>LEVEL OF PROTEIN EXPRESSION [LARGE SCALE ANALYSIS]</scope>
</reference>
<evidence type="ECO:0000255" key="1"/>
<evidence type="ECO:0000269" key="2">
    <source>
    </source>
</evidence>
<evidence type="ECO:0000269" key="3">
    <source>
    </source>
</evidence>
<evidence type="ECO:0000269" key="4">
    <source>
    </source>
</evidence>
<evidence type="ECO:0000269" key="5">
    <source>
    </source>
</evidence>
<evidence type="ECO:0000269" key="6">
    <source>
    </source>
</evidence>
<evidence type="ECO:0000305" key="7"/>
<feature type="chain" id="PRO_0000240363" description="GPI ethanolamine phosphate transferase 3">
    <location>
        <begin position="1"/>
        <end position="1017"/>
    </location>
</feature>
<feature type="transmembrane region" description="Helical" evidence="1">
    <location>
        <begin position="34"/>
        <end position="54"/>
    </location>
</feature>
<feature type="transmembrane region" description="Helical" evidence="1">
    <location>
        <begin position="347"/>
        <end position="367"/>
    </location>
</feature>
<feature type="transmembrane region" description="Helical" evidence="1">
    <location>
        <begin position="457"/>
        <end position="477"/>
    </location>
</feature>
<feature type="transmembrane region" description="Helical" evidence="1">
    <location>
        <begin position="484"/>
        <end position="504"/>
    </location>
</feature>
<feature type="transmembrane region" description="Helical" evidence="1">
    <location>
        <begin position="515"/>
        <end position="535"/>
    </location>
</feature>
<feature type="transmembrane region" description="Helical" evidence="1">
    <location>
        <begin position="558"/>
        <end position="578"/>
    </location>
</feature>
<feature type="transmembrane region" description="Helical" evidence="1">
    <location>
        <begin position="582"/>
        <end position="602"/>
    </location>
</feature>
<feature type="transmembrane region" description="Helical" evidence="1">
    <location>
        <begin position="644"/>
        <end position="664"/>
    </location>
</feature>
<feature type="transmembrane region" description="Helical" evidence="1">
    <location>
        <begin position="685"/>
        <end position="705"/>
    </location>
</feature>
<feature type="transmembrane region" description="Helical" evidence="1">
    <location>
        <begin position="715"/>
        <end position="735"/>
    </location>
</feature>
<feature type="transmembrane region" description="Helical" evidence="1">
    <location>
        <begin position="765"/>
        <end position="785"/>
    </location>
</feature>
<feature type="transmembrane region" description="Helical" evidence="1">
    <location>
        <begin position="806"/>
        <end position="826"/>
    </location>
</feature>
<feature type="transmembrane region" description="Helical" evidence="1">
    <location>
        <begin position="829"/>
        <end position="849"/>
    </location>
</feature>
<feature type="transmembrane region" description="Helical" evidence="1">
    <location>
        <begin position="903"/>
        <end position="923"/>
    </location>
</feature>
<feature type="transmembrane region" description="Helical" evidence="1">
    <location>
        <begin position="947"/>
        <end position="967"/>
    </location>
</feature>
<feature type="transmembrane region" description="Helical" evidence="1">
    <location>
        <begin position="981"/>
        <end position="1001"/>
    </location>
</feature>
<feature type="glycosylation site" description="N-linked (GlcNAc...) asparagine" evidence="1">
    <location>
        <position position="66"/>
    </location>
</feature>
<feature type="glycosylation site" description="N-linked (GlcNAc...) asparagine" evidence="1">
    <location>
        <position position="71"/>
    </location>
</feature>
<feature type="glycosylation site" description="N-linked (GlcNAc...) asparagine" evidence="1">
    <location>
        <position position="100"/>
    </location>
</feature>
<feature type="glycosylation site" description="N-linked (GlcNAc...) asparagine" evidence="1">
    <location>
        <position position="182"/>
    </location>
</feature>
<feature type="glycosylation site" description="N-linked (GlcNAc...) asparagine" evidence="1">
    <location>
        <position position="203"/>
    </location>
</feature>
<feature type="glycosylation site" description="N-linked (GlcNAc...) asparagine" evidence="1">
    <location>
        <position position="411"/>
    </location>
</feature>
<feature type="glycosylation site" description="N-linked (GlcNAc...) asparagine" evidence="1">
    <location>
        <position position="681"/>
    </location>
</feature>
<feature type="glycosylation site" description="N-linked (GlcNAc...) asparagine" evidence="1">
    <location>
        <position position="682"/>
    </location>
</feature>
<feature type="glycosylation site" description="N-linked (GlcNAc...) asparagine" evidence="1">
    <location>
        <position position="707"/>
    </location>
</feature>
<feature type="glycosylation site" description="N-linked (GlcNAc...) asparagine" evidence="1">
    <location>
        <position position="742"/>
    </location>
</feature>
<feature type="mutagenesis site" description="In MCP1-5; impairs growth at 36 degrees Celsius; when associated with S-231 and T-411." evidence="5">
    <original>H</original>
    <variation>R</variation>
    <location>
        <position position="198"/>
    </location>
</feature>
<feature type="mutagenesis site" description="In MCP1-5; impairs growth at 36 degrees Celsius; when associated with R-198 and T-411." evidence="5">
    <original>L</original>
    <variation>S</variation>
    <location>
        <position position="231"/>
    </location>
</feature>
<feature type="mutagenesis site" description="In MCP1-4; impairs growth at 36 degrees Celsius; when associated with P-556; G-887 and A-901." evidence="5">
    <original>I</original>
    <variation>T</variation>
    <location>
        <position position="367"/>
    </location>
</feature>
<feature type="mutagenesis site" description="In MCP1-5; impairs growth at 36 degrees Celsius; when associated with R-198 and S-231." evidence="5">
    <original>N</original>
    <variation>T</variation>
    <location>
        <position position="411"/>
    </location>
</feature>
<feature type="mutagenesis site" description="In MCP1-4; impairs growth at 36 degrees Celsius; when associated with T-367; G-887 and A-901." evidence="5">
    <original>S</original>
    <variation>P</variation>
    <location>
        <position position="556"/>
    </location>
</feature>
<feature type="mutagenesis site" description="In MCP1-4; impairs growth at 36 degrees Celsius; when associated with T-367; P-556 and A-901." evidence="5">
    <original>D</original>
    <variation>G</variation>
    <location>
        <position position="887"/>
    </location>
</feature>
<feature type="mutagenesis site" description="In MCP1-4; impairs growth at 36 degrees Celsius; when associated with T-367; P-556 and G-887." evidence="5">
    <original>T</original>
    <variation>A</variation>
    <location>
        <position position="901"/>
    </location>
</feature>
<proteinExistence type="evidence at protein level"/>
<organism>
    <name type="scientific">Saccharomyces cerevisiae (strain ATCC 204508 / S288c)</name>
    <name type="common">Baker's yeast</name>
    <dbReference type="NCBI Taxonomy" id="559292"/>
    <lineage>
        <taxon>Eukaryota</taxon>
        <taxon>Fungi</taxon>
        <taxon>Dikarya</taxon>
        <taxon>Ascomycota</taxon>
        <taxon>Saccharomycotina</taxon>
        <taxon>Saccharomycetes</taxon>
        <taxon>Saccharomycetales</taxon>
        <taxon>Saccharomycetaceae</taxon>
        <taxon>Saccharomyces</taxon>
    </lineage>
</organism>
<gene>
    <name type="primary">GPI13</name>
    <name type="synonym">MPC1</name>
    <name type="ordered locus">YLL031C</name>
</gene>